<gene>
    <name evidence="1" type="primary">rpsF</name>
    <name type="ordered locus">ACP_2066</name>
</gene>
<accession>C1F904</accession>
<evidence type="ECO:0000255" key="1">
    <source>
        <dbReference type="HAMAP-Rule" id="MF_00360"/>
    </source>
</evidence>
<evidence type="ECO:0000256" key="2">
    <source>
        <dbReference type="SAM" id="MobiDB-lite"/>
    </source>
</evidence>
<evidence type="ECO:0000305" key="3"/>
<organism>
    <name type="scientific">Acidobacterium capsulatum (strain ATCC 51196 / DSM 11244 / BCRC 80197 / JCM 7670 / NBRC 15755 / NCIMB 13165 / 161)</name>
    <dbReference type="NCBI Taxonomy" id="240015"/>
    <lineage>
        <taxon>Bacteria</taxon>
        <taxon>Pseudomonadati</taxon>
        <taxon>Acidobacteriota</taxon>
        <taxon>Terriglobia</taxon>
        <taxon>Terriglobales</taxon>
        <taxon>Acidobacteriaceae</taxon>
        <taxon>Acidobacterium</taxon>
    </lineage>
</organism>
<feature type="chain" id="PRO_1000133503" description="Small ribosomal subunit protein bS6">
    <location>
        <begin position="1"/>
        <end position="141"/>
    </location>
</feature>
<feature type="region of interest" description="Disordered" evidence="2">
    <location>
        <begin position="110"/>
        <end position="141"/>
    </location>
</feature>
<feature type="compositionally biased region" description="Low complexity" evidence="2">
    <location>
        <begin position="117"/>
        <end position="141"/>
    </location>
</feature>
<dbReference type="EMBL" id="CP001472">
    <property type="protein sequence ID" value="ACO32442.1"/>
    <property type="molecule type" value="Genomic_DNA"/>
</dbReference>
<dbReference type="RefSeq" id="WP_015897168.1">
    <property type="nucleotide sequence ID" value="NC_012483.1"/>
</dbReference>
<dbReference type="SMR" id="C1F904"/>
<dbReference type="FunCoup" id="C1F904">
    <property type="interactions" value="526"/>
</dbReference>
<dbReference type="STRING" id="240015.ACP_2066"/>
<dbReference type="KEGG" id="aca:ACP_2066"/>
<dbReference type="eggNOG" id="COG0360">
    <property type="taxonomic scope" value="Bacteria"/>
</dbReference>
<dbReference type="HOGENOM" id="CLU_113441_5_0_0"/>
<dbReference type="InParanoid" id="C1F904"/>
<dbReference type="OrthoDB" id="9812702at2"/>
<dbReference type="Proteomes" id="UP000002207">
    <property type="component" value="Chromosome"/>
</dbReference>
<dbReference type="GO" id="GO:0005737">
    <property type="term" value="C:cytoplasm"/>
    <property type="evidence" value="ECO:0007669"/>
    <property type="project" value="UniProtKB-ARBA"/>
</dbReference>
<dbReference type="GO" id="GO:1990904">
    <property type="term" value="C:ribonucleoprotein complex"/>
    <property type="evidence" value="ECO:0007669"/>
    <property type="project" value="UniProtKB-KW"/>
</dbReference>
<dbReference type="GO" id="GO:0005840">
    <property type="term" value="C:ribosome"/>
    <property type="evidence" value="ECO:0007669"/>
    <property type="project" value="UniProtKB-KW"/>
</dbReference>
<dbReference type="GO" id="GO:0070181">
    <property type="term" value="F:small ribosomal subunit rRNA binding"/>
    <property type="evidence" value="ECO:0007669"/>
    <property type="project" value="TreeGrafter"/>
</dbReference>
<dbReference type="GO" id="GO:0003735">
    <property type="term" value="F:structural constituent of ribosome"/>
    <property type="evidence" value="ECO:0007669"/>
    <property type="project" value="InterPro"/>
</dbReference>
<dbReference type="GO" id="GO:0006412">
    <property type="term" value="P:translation"/>
    <property type="evidence" value="ECO:0007669"/>
    <property type="project" value="UniProtKB-UniRule"/>
</dbReference>
<dbReference type="CDD" id="cd00473">
    <property type="entry name" value="bS6"/>
    <property type="match status" value="1"/>
</dbReference>
<dbReference type="Gene3D" id="3.30.70.60">
    <property type="match status" value="1"/>
</dbReference>
<dbReference type="HAMAP" id="MF_00360">
    <property type="entry name" value="Ribosomal_bS6"/>
    <property type="match status" value="1"/>
</dbReference>
<dbReference type="InterPro" id="IPR000529">
    <property type="entry name" value="Ribosomal_bS6"/>
</dbReference>
<dbReference type="InterPro" id="IPR035980">
    <property type="entry name" value="Ribosomal_bS6_sf"/>
</dbReference>
<dbReference type="InterPro" id="IPR020814">
    <property type="entry name" value="Ribosomal_S6_plastid/chlpt"/>
</dbReference>
<dbReference type="InterPro" id="IPR014717">
    <property type="entry name" value="Transl_elong_EF1B/ribsomal_bS6"/>
</dbReference>
<dbReference type="NCBIfam" id="TIGR00166">
    <property type="entry name" value="S6"/>
    <property type="match status" value="1"/>
</dbReference>
<dbReference type="PANTHER" id="PTHR21011">
    <property type="entry name" value="MITOCHONDRIAL 28S RIBOSOMAL PROTEIN S6"/>
    <property type="match status" value="1"/>
</dbReference>
<dbReference type="PANTHER" id="PTHR21011:SF1">
    <property type="entry name" value="SMALL RIBOSOMAL SUBUNIT PROTEIN BS6M"/>
    <property type="match status" value="1"/>
</dbReference>
<dbReference type="Pfam" id="PF01250">
    <property type="entry name" value="Ribosomal_S6"/>
    <property type="match status" value="1"/>
</dbReference>
<dbReference type="SUPFAM" id="SSF54995">
    <property type="entry name" value="Ribosomal protein S6"/>
    <property type="match status" value="1"/>
</dbReference>
<name>RS6_ACIC5</name>
<proteinExistence type="inferred from homology"/>
<comment type="function">
    <text evidence="1">Binds together with bS18 to 16S ribosomal RNA.</text>
</comment>
<comment type="similarity">
    <text evidence="1">Belongs to the bacterial ribosomal protein bS6 family.</text>
</comment>
<sequence>MDRFYEVMFIVRPDLAEEEVDKIIASLEQTVTNGGGTIRSTEKMGRRKLAYLVRKFSEGNYILLTVDADGPLVAELERRLRVTEQVIKFITVRMDEEEKRLNKIKAIRASRTKVSDQPAAVEAAEAPAAPAAQEESAPASA</sequence>
<keyword id="KW-1185">Reference proteome</keyword>
<keyword id="KW-0687">Ribonucleoprotein</keyword>
<keyword id="KW-0689">Ribosomal protein</keyword>
<keyword id="KW-0694">RNA-binding</keyword>
<keyword id="KW-0699">rRNA-binding</keyword>
<reference key="1">
    <citation type="journal article" date="2009" name="Appl. Environ. Microbiol.">
        <title>Three genomes from the phylum Acidobacteria provide insight into the lifestyles of these microorganisms in soils.</title>
        <authorList>
            <person name="Ward N.L."/>
            <person name="Challacombe J.F."/>
            <person name="Janssen P.H."/>
            <person name="Henrissat B."/>
            <person name="Coutinho P.M."/>
            <person name="Wu M."/>
            <person name="Xie G."/>
            <person name="Haft D.H."/>
            <person name="Sait M."/>
            <person name="Badger J."/>
            <person name="Barabote R.D."/>
            <person name="Bradley B."/>
            <person name="Brettin T.S."/>
            <person name="Brinkac L.M."/>
            <person name="Bruce D."/>
            <person name="Creasy T."/>
            <person name="Daugherty S.C."/>
            <person name="Davidsen T.M."/>
            <person name="DeBoy R.T."/>
            <person name="Detter J.C."/>
            <person name="Dodson R.J."/>
            <person name="Durkin A.S."/>
            <person name="Ganapathy A."/>
            <person name="Gwinn-Giglio M."/>
            <person name="Han C.S."/>
            <person name="Khouri H."/>
            <person name="Kiss H."/>
            <person name="Kothari S.P."/>
            <person name="Madupu R."/>
            <person name="Nelson K.E."/>
            <person name="Nelson W.C."/>
            <person name="Paulsen I."/>
            <person name="Penn K."/>
            <person name="Ren Q."/>
            <person name="Rosovitz M.J."/>
            <person name="Selengut J.D."/>
            <person name="Shrivastava S."/>
            <person name="Sullivan S.A."/>
            <person name="Tapia R."/>
            <person name="Thompson L.S."/>
            <person name="Watkins K.L."/>
            <person name="Yang Q."/>
            <person name="Yu C."/>
            <person name="Zafar N."/>
            <person name="Zhou L."/>
            <person name="Kuske C.R."/>
        </authorList>
    </citation>
    <scope>NUCLEOTIDE SEQUENCE [LARGE SCALE GENOMIC DNA]</scope>
    <source>
        <strain>ATCC 51196 / DSM 11244 / BCRC 80197 / JCM 7670 / NBRC 15755 / NCIMB 13165 / 161</strain>
    </source>
</reference>
<protein>
    <recommendedName>
        <fullName evidence="1">Small ribosomal subunit protein bS6</fullName>
    </recommendedName>
    <alternativeName>
        <fullName evidence="3">30S ribosomal protein S6</fullName>
    </alternativeName>
</protein>